<evidence type="ECO:0000255" key="1">
    <source>
        <dbReference type="HAMAP-Rule" id="MF_01358"/>
    </source>
</evidence>
<accession>B2HGE5</accession>
<protein>
    <recommendedName>
        <fullName evidence="1">NADH-quinone oxidoreductase subunit D</fullName>
        <ecNumber evidence="1">7.1.1.-</ecNumber>
    </recommendedName>
    <alternativeName>
        <fullName evidence="1">NADH dehydrogenase I subunit D</fullName>
    </alternativeName>
    <alternativeName>
        <fullName evidence="1">NDH-1 subunit D</fullName>
    </alternativeName>
</protein>
<organism>
    <name type="scientific">Mycobacterium marinum (strain ATCC BAA-535 / M)</name>
    <dbReference type="NCBI Taxonomy" id="216594"/>
    <lineage>
        <taxon>Bacteria</taxon>
        <taxon>Bacillati</taxon>
        <taxon>Actinomycetota</taxon>
        <taxon>Actinomycetes</taxon>
        <taxon>Mycobacteriales</taxon>
        <taxon>Mycobacteriaceae</taxon>
        <taxon>Mycobacterium</taxon>
        <taxon>Mycobacterium ulcerans group</taxon>
    </lineage>
</organism>
<reference key="1">
    <citation type="journal article" date="2008" name="Genome Res.">
        <title>Insights from the complete genome sequence of Mycobacterium marinum on the evolution of Mycobacterium tuberculosis.</title>
        <authorList>
            <person name="Stinear T.P."/>
            <person name="Seemann T."/>
            <person name="Harrison P.F."/>
            <person name="Jenkin G.A."/>
            <person name="Davies J.K."/>
            <person name="Johnson P.D."/>
            <person name="Abdellah Z."/>
            <person name="Arrowsmith C."/>
            <person name="Chillingworth T."/>
            <person name="Churcher C."/>
            <person name="Clarke K."/>
            <person name="Cronin A."/>
            <person name="Davis P."/>
            <person name="Goodhead I."/>
            <person name="Holroyd N."/>
            <person name="Jagels K."/>
            <person name="Lord A."/>
            <person name="Moule S."/>
            <person name="Mungall K."/>
            <person name="Norbertczak H."/>
            <person name="Quail M.A."/>
            <person name="Rabbinowitsch E."/>
            <person name="Walker D."/>
            <person name="White B."/>
            <person name="Whitehead S."/>
            <person name="Small P.L."/>
            <person name="Brosch R."/>
            <person name="Ramakrishnan L."/>
            <person name="Fischbach M.A."/>
            <person name="Parkhill J."/>
            <person name="Cole S.T."/>
        </authorList>
    </citation>
    <scope>NUCLEOTIDE SEQUENCE [LARGE SCALE GENOMIC DNA]</scope>
    <source>
        <strain>ATCC BAA-535 / M</strain>
    </source>
</reference>
<gene>
    <name evidence="1" type="primary">nuoD</name>
    <name type="ordered locus">MMAR_1480</name>
</gene>
<feature type="chain" id="PRO_0000357856" description="NADH-quinone oxidoreductase subunit D">
    <location>
        <begin position="1"/>
        <end position="432"/>
    </location>
</feature>
<dbReference type="EC" id="7.1.1.-" evidence="1"/>
<dbReference type="EMBL" id="CP000854">
    <property type="protein sequence ID" value="ACC39931.1"/>
    <property type="molecule type" value="Genomic_DNA"/>
</dbReference>
<dbReference type="RefSeq" id="WP_012393324.1">
    <property type="nucleotide sequence ID" value="NC_010612.1"/>
</dbReference>
<dbReference type="SMR" id="B2HGE5"/>
<dbReference type="STRING" id="216594.MMAR_1480"/>
<dbReference type="GeneID" id="34342281"/>
<dbReference type="KEGG" id="mmi:MMAR_1480"/>
<dbReference type="eggNOG" id="COG0649">
    <property type="taxonomic scope" value="Bacteria"/>
</dbReference>
<dbReference type="HOGENOM" id="CLU_015134_1_2_11"/>
<dbReference type="OrthoDB" id="9801496at2"/>
<dbReference type="Proteomes" id="UP000001190">
    <property type="component" value="Chromosome"/>
</dbReference>
<dbReference type="GO" id="GO:0005886">
    <property type="term" value="C:plasma membrane"/>
    <property type="evidence" value="ECO:0007669"/>
    <property type="project" value="UniProtKB-SubCell"/>
</dbReference>
<dbReference type="GO" id="GO:0051287">
    <property type="term" value="F:NAD binding"/>
    <property type="evidence" value="ECO:0007669"/>
    <property type="project" value="InterPro"/>
</dbReference>
<dbReference type="GO" id="GO:0050136">
    <property type="term" value="F:NADH:ubiquinone reductase (non-electrogenic) activity"/>
    <property type="evidence" value="ECO:0007669"/>
    <property type="project" value="UniProtKB-UniRule"/>
</dbReference>
<dbReference type="GO" id="GO:0048038">
    <property type="term" value="F:quinone binding"/>
    <property type="evidence" value="ECO:0007669"/>
    <property type="project" value="UniProtKB-KW"/>
</dbReference>
<dbReference type="FunFam" id="1.10.645.10:FF:000005">
    <property type="entry name" value="NADH-quinone oxidoreductase subunit D"/>
    <property type="match status" value="1"/>
</dbReference>
<dbReference type="Gene3D" id="1.10.645.10">
    <property type="entry name" value="Cytochrome-c3 Hydrogenase, chain B"/>
    <property type="match status" value="1"/>
</dbReference>
<dbReference type="HAMAP" id="MF_01358">
    <property type="entry name" value="NDH1_NuoD"/>
    <property type="match status" value="1"/>
</dbReference>
<dbReference type="InterPro" id="IPR001135">
    <property type="entry name" value="NADH_Q_OxRdtase_suD"/>
</dbReference>
<dbReference type="InterPro" id="IPR014029">
    <property type="entry name" value="NADH_UbQ_OxRdtase_49kDa_CS"/>
</dbReference>
<dbReference type="InterPro" id="IPR022885">
    <property type="entry name" value="NDH1_su_D/H"/>
</dbReference>
<dbReference type="InterPro" id="IPR029014">
    <property type="entry name" value="NiFe-Hase_large"/>
</dbReference>
<dbReference type="NCBIfam" id="TIGR01962">
    <property type="entry name" value="NuoD"/>
    <property type="match status" value="1"/>
</dbReference>
<dbReference type="NCBIfam" id="NF004739">
    <property type="entry name" value="PRK06075.1"/>
    <property type="match status" value="1"/>
</dbReference>
<dbReference type="PANTHER" id="PTHR11993:SF10">
    <property type="entry name" value="NADH DEHYDROGENASE [UBIQUINONE] IRON-SULFUR PROTEIN 2, MITOCHONDRIAL"/>
    <property type="match status" value="1"/>
</dbReference>
<dbReference type="PANTHER" id="PTHR11993">
    <property type="entry name" value="NADH-UBIQUINONE OXIDOREDUCTASE 49 KDA SUBUNIT"/>
    <property type="match status" value="1"/>
</dbReference>
<dbReference type="Pfam" id="PF00346">
    <property type="entry name" value="Complex1_49kDa"/>
    <property type="match status" value="1"/>
</dbReference>
<dbReference type="SUPFAM" id="SSF56762">
    <property type="entry name" value="HydB/Nqo4-like"/>
    <property type="match status" value="1"/>
</dbReference>
<dbReference type="PROSITE" id="PS00535">
    <property type="entry name" value="COMPLEX1_49K"/>
    <property type="match status" value="1"/>
</dbReference>
<comment type="function">
    <text evidence="1">NDH-1 shuttles electrons from NADH, via FMN and iron-sulfur (Fe-S) centers, to quinones in the respiratory chain. The immediate electron acceptor for the enzyme in this species is believed to be a menaquinone. Couples the redox reaction to proton translocation (for every two electrons transferred, four hydrogen ions are translocated across the cytoplasmic membrane), and thus conserves the redox energy in a proton gradient.</text>
</comment>
<comment type="catalytic activity">
    <reaction evidence="1">
        <text>a quinone + NADH + 5 H(+)(in) = a quinol + NAD(+) + 4 H(+)(out)</text>
        <dbReference type="Rhea" id="RHEA:57888"/>
        <dbReference type="ChEBI" id="CHEBI:15378"/>
        <dbReference type="ChEBI" id="CHEBI:24646"/>
        <dbReference type="ChEBI" id="CHEBI:57540"/>
        <dbReference type="ChEBI" id="CHEBI:57945"/>
        <dbReference type="ChEBI" id="CHEBI:132124"/>
    </reaction>
</comment>
<comment type="subunit">
    <text evidence="1">NDH-1 is composed of 14 different subunits. Subunits NuoB, C, D, E, F, and G constitute the peripheral sector of the complex.</text>
</comment>
<comment type="subcellular location">
    <subcellularLocation>
        <location evidence="1">Cell membrane</location>
        <topology evidence="1">Peripheral membrane protein</topology>
        <orientation evidence="1">Cytoplasmic side</orientation>
    </subcellularLocation>
</comment>
<comment type="similarity">
    <text evidence="1">Belongs to the complex I 49 kDa subunit family.</text>
</comment>
<name>NUOD_MYCMM</name>
<proteinExistence type="inferred from homology"/>
<keyword id="KW-1003">Cell membrane</keyword>
<keyword id="KW-0472">Membrane</keyword>
<keyword id="KW-0520">NAD</keyword>
<keyword id="KW-0874">Quinone</keyword>
<keyword id="KW-1185">Reference proteome</keyword>
<keyword id="KW-1278">Translocase</keyword>
<keyword id="KW-0813">Transport</keyword>
<sequence>MTDTETVLVAGGQDWNEIVEAARGADPGERIVVNMGPQHPSTHGVLRLILEIEGETVTEARCGIGYLHTGIEKNLEYRYWTQGVTFVTRMDYLSPFFNETAYCLGVEKLLGITDEIPERVNVIRVMMMELNRISSHLVALATGGMELGAMTPMFVGFRAREIILSLFESITGLRMNSAYIRPGGVAQDLPPDGPTEIAKAIADLRQPLREMGDLLNENAIWKARTQDVGYLDLAGCMALGITGPILRSTGLPHDLRKSEPYCGYENYEFDVITADGCDAYGRYMIRVKEMWESIKIVEQCLDRLRPGPTMIEDRKLAWPADLKVGPDGMGNSPEHIAKIMGSSMEALIHHFKLVTEGIRVPAGQVYVAVESPRGELGVHMVSDGGTRPYRVHYRDPSFTNLQAVAAMSEGGMVADLITAVASIDPVMGGVDR</sequence>